<accession>Q9K0C7</accession>
<keyword id="KW-0997">Cell inner membrane</keyword>
<keyword id="KW-1003">Cell membrane</keyword>
<keyword id="KW-0963">Cytoplasm</keyword>
<keyword id="KW-0342">GTP-binding</keyword>
<keyword id="KW-0472">Membrane</keyword>
<keyword id="KW-0547">Nucleotide-binding</keyword>
<keyword id="KW-1185">Reference proteome</keyword>
<keyword id="KW-0690">Ribosome biogenesis</keyword>
<keyword id="KW-0694">RNA-binding</keyword>
<keyword id="KW-0699">rRNA-binding</keyword>
<evidence type="ECO:0000255" key="1">
    <source>
        <dbReference type="HAMAP-Rule" id="MF_00367"/>
    </source>
</evidence>
<evidence type="ECO:0000255" key="2">
    <source>
        <dbReference type="PROSITE-ProRule" id="PRU01050"/>
    </source>
</evidence>
<evidence type="ECO:0000305" key="3"/>
<reference key="1">
    <citation type="journal article" date="2000" name="Science">
        <title>Complete genome sequence of Neisseria meningitidis serogroup B strain MC58.</title>
        <authorList>
            <person name="Tettelin H."/>
            <person name="Saunders N.J."/>
            <person name="Heidelberg J.F."/>
            <person name="Jeffries A.C."/>
            <person name="Nelson K.E."/>
            <person name="Eisen J.A."/>
            <person name="Ketchum K.A."/>
            <person name="Hood D.W."/>
            <person name="Peden J.F."/>
            <person name="Dodson R.J."/>
            <person name="Nelson W.C."/>
            <person name="Gwinn M.L."/>
            <person name="DeBoy R.T."/>
            <person name="Peterson J.D."/>
            <person name="Hickey E.K."/>
            <person name="Haft D.H."/>
            <person name="Salzberg S.L."/>
            <person name="White O."/>
            <person name="Fleischmann R.D."/>
            <person name="Dougherty B.A."/>
            <person name="Mason T.M."/>
            <person name="Ciecko A."/>
            <person name="Parksey D.S."/>
            <person name="Blair E."/>
            <person name="Cittone H."/>
            <person name="Clark E.B."/>
            <person name="Cotton M.D."/>
            <person name="Utterback T.R."/>
            <person name="Khouri H.M."/>
            <person name="Qin H."/>
            <person name="Vamathevan J.J."/>
            <person name="Gill J."/>
            <person name="Scarlato V."/>
            <person name="Masignani V."/>
            <person name="Pizza M."/>
            <person name="Grandi G."/>
            <person name="Sun L."/>
            <person name="Smith H.O."/>
            <person name="Fraser C.M."/>
            <person name="Moxon E.R."/>
            <person name="Rappuoli R."/>
            <person name="Venter J.C."/>
        </authorList>
    </citation>
    <scope>NUCLEOTIDE SEQUENCE [LARGE SCALE GENOMIC DNA]</scope>
    <source>
        <strain>ATCC BAA-335 / MC58</strain>
    </source>
</reference>
<proteinExistence type="inferred from homology"/>
<dbReference type="EMBL" id="AE002098">
    <property type="protein sequence ID" value="AAF41105.1"/>
    <property type="status" value="ALT_INIT"/>
    <property type="molecule type" value="Genomic_DNA"/>
</dbReference>
<dbReference type="PIR" id="F81169">
    <property type="entry name" value="F81169"/>
</dbReference>
<dbReference type="RefSeq" id="NP_273729.1">
    <property type="nucleotide sequence ID" value="NC_003112.2"/>
</dbReference>
<dbReference type="RefSeq" id="WP_002244050.1">
    <property type="nucleotide sequence ID" value="NC_003112.2"/>
</dbReference>
<dbReference type="SMR" id="Q9K0C7"/>
<dbReference type="FunCoup" id="Q9K0C7">
    <property type="interactions" value="470"/>
</dbReference>
<dbReference type="STRING" id="122586.NMB0687"/>
<dbReference type="PaxDb" id="122586-NMB0687"/>
<dbReference type="KEGG" id="nme:NMB0687"/>
<dbReference type="PATRIC" id="fig|122586.8.peg.861"/>
<dbReference type="HOGENOM" id="CLU_038009_1_2_4"/>
<dbReference type="InParanoid" id="Q9K0C7"/>
<dbReference type="OrthoDB" id="9805918at2"/>
<dbReference type="Proteomes" id="UP000000425">
    <property type="component" value="Chromosome"/>
</dbReference>
<dbReference type="GO" id="GO:0005829">
    <property type="term" value="C:cytosol"/>
    <property type="evidence" value="ECO:0000318"/>
    <property type="project" value="GO_Central"/>
</dbReference>
<dbReference type="GO" id="GO:0005886">
    <property type="term" value="C:plasma membrane"/>
    <property type="evidence" value="ECO:0007669"/>
    <property type="project" value="UniProtKB-SubCell"/>
</dbReference>
<dbReference type="GO" id="GO:0005525">
    <property type="term" value="F:GTP binding"/>
    <property type="evidence" value="ECO:0007669"/>
    <property type="project" value="UniProtKB-UniRule"/>
</dbReference>
<dbReference type="GO" id="GO:0003924">
    <property type="term" value="F:GTPase activity"/>
    <property type="evidence" value="ECO:0007669"/>
    <property type="project" value="UniProtKB-UniRule"/>
</dbReference>
<dbReference type="GO" id="GO:0043024">
    <property type="term" value="F:ribosomal small subunit binding"/>
    <property type="evidence" value="ECO:0000318"/>
    <property type="project" value="GO_Central"/>
</dbReference>
<dbReference type="GO" id="GO:0019843">
    <property type="term" value="F:rRNA binding"/>
    <property type="evidence" value="ECO:0000318"/>
    <property type="project" value="GO_Central"/>
</dbReference>
<dbReference type="GO" id="GO:0070181">
    <property type="term" value="F:small ribosomal subunit rRNA binding"/>
    <property type="evidence" value="ECO:0007669"/>
    <property type="project" value="UniProtKB-UniRule"/>
</dbReference>
<dbReference type="GO" id="GO:0000028">
    <property type="term" value="P:ribosomal small subunit assembly"/>
    <property type="evidence" value="ECO:0000318"/>
    <property type="project" value="GO_Central"/>
</dbReference>
<dbReference type="CDD" id="cd04163">
    <property type="entry name" value="Era"/>
    <property type="match status" value="1"/>
</dbReference>
<dbReference type="CDD" id="cd22534">
    <property type="entry name" value="KH-II_Era"/>
    <property type="match status" value="1"/>
</dbReference>
<dbReference type="FunFam" id="3.30.300.20:FF:000003">
    <property type="entry name" value="GTPase Era"/>
    <property type="match status" value="1"/>
</dbReference>
<dbReference type="FunFam" id="3.40.50.300:FF:000094">
    <property type="entry name" value="GTPase Era"/>
    <property type="match status" value="1"/>
</dbReference>
<dbReference type="Gene3D" id="3.30.300.20">
    <property type="match status" value="1"/>
</dbReference>
<dbReference type="Gene3D" id="3.40.50.300">
    <property type="entry name" value="P-loop containing nucleotide triphosphate hydrolases"/>
    <property type="match status" value="1"/>
</dbReference>
<dbReference type="HAMAP" id="MF_00367">
    <property type="entry name" value="GTPase_Era"/>
    <property type="match status" value="1"/>
</dbReference>
<dbReference type="InterPro" id="IPR030388">
    <property type="entry name" value="G_ERA_dom"/>
</dbReference>
<dbReference type="InterPro" id="IPR006073">
    <property type="entry name" value="GTP-bd"/>
</dbReference>
<dbReference type="InterPro" id="IPR005662">
    <property type="entry name" value="GTPase_Era-like"/>
</dbReference>
<dbReference type="InterPro" id="IPR015946">
    <property type="entry name" value="KH_dom-like_a/b"/>
</dbReference>
<dbReference type="InterPro" id="IPR004044">
    <property type="entry name" value="KH_dom_type_2"/>
</dbReference>
<dbReference type="InterPro" id="IPR009019">
    <property type="entry name" value="KH_sf_prok-type"/>
</dbReference>
<dbReference type="InterPro" id="IPR027417">
    <property type="entry name" value="P-loop_NTPase"/>
</dbReference>
<dbReference type="InterPro" id="IPR005225">
    <property type="entry name" value="Small_GTP-bd"/>
</dbReference>
<dbReference type="NCBIfam" id="TIGR00436">
    <property type="entry name" value="era"/>
    <property type="match status" value="1"/>
</dbReference>
<dbReference type="NCBIfam" id="NF000908">
    <property type="entry name" value="PRK00089.1"/>
    <property type="match status" value="1"/>
</dbReference>
<dbReference type="NCBIfam" id="TIGR00231">
    <property type="entry name" value="small_GTP"/>
    <property type="match status" value="1"/>
</dbReference>
<dbReference type="PANTHER" id="PTHR42698">
    <property type="entry name" value="GTPASE ERA"/>
    <property type="match status" value="1"/>
</dbReference>
<dbReference type="PANTHER" id="PTHR42698:SF1">
    <property type="entry name" value="GTPASE ERA, MITOCHONDRIAL"/>
    <property type="match status" value="1"/>
</dbReference>
<dbReference type="Pfam" id="PF07650">
    <property type="entry name" value="KH_2"/>
    <property type="match status" value="1"/>
</dbReference>
<dbReference type="Pfam" id="PF01926">
    <property type="entry name" value="MMR_HSR1"/>
    <property type="match status" value="1"/>
</dbReference>
<dbReference type="PRINTS" id="PR00326">
    <property type="entry name" value="GTP1OBG"/>
</dbReference>
<dbReference type="SUPFAM" id="SSF52540">
    <property type="entry name" value="P-loop containing nucleoside triphosphate hydrolases"/>
    <property type="match status" value="1"/>
</dbReference>
<dbReference type="SUPFAM" id="SSF54814">
    <property type="entry name" value="Prokaryotic type KH domain (KH-domain type II)"/>
    <property type="match status" value="1"/>
</dbReference>
<dbReference type="PROSITE" id="PS51713">
    <property type="entry name" value="G_ERA"/>
    <property type="match status" value="1"/>
</dbReference>
<dbReference type="PROSITE" id="PS50823">
    <property type="entry name" value="KH_TYPE_2"/>
    <property type="match status" value="1"/>
</dbReference>
<name>ERA_NEIMB</name>
<comment type="function">
    <text evidence="1">An essential GTPase that binds both GDP and GTP, with rapid nucleotide exchange. Plays a role in 16S rRNA processing and 30S ribosomal subunit biogenesis and possibly also in cell cycle regulation and energy metabolism.</text>
</comment>
<comment type="subunit">
    <text evidence="1">Monomer.</text>
</comment>
<comment type="subcellular location">
    <subcellularLocation>
        <location>Cytoplasm</location>
    </subcellularLocation>
    <subcellularLocation>
        <location evidence="1">Cell inner membrane</location>
        <topology evidence="1">Peripheral membrane protein</topology>
    </subcellularLocation>
</comment>
<comment type="similarity">
    <text evidence="1 2">Belongs to the TRAFAC class TrmE-Era-EngA-EngB-Septin-like GTPase superfamily. Era GTPase family.</text>
</comment>
<comment type="sequence caution" evidence="3">
    <conflict type="erroneous initiation">
        <sequence resource="EMBL-CDS" id="AAF41105"/>
    </conflict>
    <text>Extended N-terminus.</text>
</comment>
<feature type="chain" id="PRO_0000180034" description="GTPase Era">
    <location>
        <begin position="1"/>
        <end position="307"/>
    </location>
</feature>
<feature type="domain" description="Era-type G" evidence="2">
    <location>
        <begin position="17"/>
        <end position="186"/>
    </location>
</feature>
<feature type="domain" description="KH type-2" evidence="1">
    <location>
        <begin position="217"/>
        <end position="293"/>
    </location>
</feature>
<feature type="region of interest" description="G1" evidence="2">
    <location>
        <begin position="25"/>
        <end position="32"/>
    </location>
</feature>
<feature type="region of interest" description="G2" evidence="2">
    <location>
        <begin position="51"/>
        <end position="55"/>
    </location>
</feature>
<feature type="region of interest" description="G3" evidence="2">
    <location>
        <begin position="72"/>
        <end position="75"/>
    </location>
</feature>
<feature type="region of interest" description="G4" evidence="2">
    <location>
        <begin position="133"/>
        <end position="136"/>
    </location>
</feature>
<feature type="region of interest" description="G5" evidence="2">
    <location>
        <begin position="165"/>
        <end position="167"/>
    </location>
</feature>
<feature type="binding site" evidence="1">
    <location>
        <begin position="25"/>
        <end position="32"/>
    </location>
    <ligand>
        <name>GTP</name>
        <dbReference type="ChEBI" id="CHEBI:37565"/>
    </ligand>
</feature>
<feature type="binding site" evidence="1">
    <location>
        <begin position="72"/>
        <end position="76"/>
    </location>
    <ligand>
        <name>GTP</name>
        <dbReference type="ChEBI" id="CHEBI:37565"/>
    </ligand>
</feature>
<feature type="binding site" evidence="1">
    <location>
        <begin position="133"/>
        <end position="136"/>
    </location>
    <ligand>
        <name>GTP</name>
        <dbReference type="ChEBI" id="CHEBI:37565"/>
    </ligand>
</feature>
<protein>
    <recommendedName>
        <fullName evidence="1">GTPase Era</fullName>
    </recommendedName>
</protein>
<gene>
    <name evidence="1" type="primary">era</name>
    <name type="ordered locus">NMB0687</name>
</gene>
<organism>
    <name type="scientific">Neisseria meningitidis serogroup B (strain ATCC BAA-335 / MC58)</name>
    <dbReference type="NCBI Taxonomy" id="122586"/>
    <lineage>
        <taxon>Bacteria</taxon>
        <taxon>Pseudomonadati</taxon>
        <taxon>Pseudomonadota</taxon>
        <taxon>Betaproteobacteria</taxon>
        <taxon>Neisseriales</taxon>
        <taxon>Neisseriaceae</taxon>
        <taxon>Neisseria</taxon>
    </lineage>
</organism>
<sequence length="307" mass="34617">MDIETFLAGERAAGGYRCGFVAIVGRPNVGKSTLMNHLIGQKISITSKKAQTTRNRVTGIYTDDTAQFVFVDTPGFQTDHRNALNDRLNQNVTEALGGVDVVVFVVEAMRFTDADRVVLKQLPKHTPVILVVNKIDKDKAKDRYALEAFVAQVRAEFEFAAAEAVSAKHGLRIANLLELIKPYLPESVPMYPEDMVTDKSARFLAMEIVREKLFRYLGEELPYAMNVEVEQFEEEDGLNRIYIAVLVDKESQKAILIGKGGERLKKISTEARLDMEKLFDTKVFLKVWVKVKSGWADDIRFLRELGL</sequence>